<dbReference type="EMBL" id="AB006080">
    <property type="protein sequence ID" value="BAA23214.1"/>
    <property type="molecule type" value="mRNA"/>
</dbReference>
<dbReference type="SMR" id="O22077"/>
<dbReference type="GO" id="GO:0009507">
    <property type="term" value="C:chloroplast"/>
    <property type="evidence" value="ECO:0007669"/>
    <property type="project" value="UniProtKB-SubCell"/>
</dbReference>
<dbReference type="GO" id="GO:0016984">
    <property type="term" value="F:ribulose-bisphosphate carboxylase activity"/>
    <property type="evidence" value="ECO:0007669"/>
    <property type="project" value="UniProtKB-UniRule"/>
</dbReference>
<dbReference type="GO" id="GO:0009853">
    <property type="term" value="P:photorespiration"/>
    <property type="evidence" value="ECO:0007669"/>
    <property type="project" value="UniProtKB-KW"/>
</dbReference>
<dbReference type="GO" id="GO:0019253">
    <property type="term" value="P:reductive pentose-phosphate cycle"/>
    <property type="evidence" value="ECO:0007669"/>
    <property type="project" value="UniProtKB-UniRule"/>
</dbReference>
<dbReference type="CDD" id="cd03527">
    <property type="entry name" value="RuBisCO_small"/>
    <property type="match status" value="1"/>
</dbReference>
<dbReference type="FunFam" id="3.30.190.10:FF:000001">
    <property type="entry name" value="Ribulose bisphosphate carboxylase small chain, chloroplastic"/>
    <property type="match status" value="1"/>
</dbReference>
<dbReference type="Gene3D" id="3.30.190.10">
    <property type="entry name" value="Ribulose bisphosphate carboxylase, small subunit"/>
    <property type="match status" value="1"/>
</dbReference>
<dbReference type="HAMAP" id="MF_00859">
    <property type="entry name" value="RuBisCO_S_bact"/>
    <property type="match status" value="1"/>
</dbReference>
<dbReference type="InterPro" id="IPR024681">
    <property type="entry name" value="RuBisCO_ssu"/>
</dbReference>
<dbReference type="InterPro" id="IPR000894">
    <property type="entry name" value="RuBisCO_ssu_dom"/>
</dbReference>
<dbReference type="InterPro" id="IPR024680">
    <property type="entry name" value="RuBisCO_ssu_N"/>
</dbReference>
<dbReference type="InterPro" id="IPR036385">
    <property type="entry name" value="RuBisCO_ssu_sf"/>
</dbReference>
<dbReference type="PANTHER" id="PTHR31262">
    <property type="entry name" value="RIBULOSE BISPHOSPHATE CARBOXYLASE SMALL CHAIN 1, CHLOROPLASTIC"/>
    <property type="match status" value="1"/>
</dbReference>
<dbReference type="PANTHER" id="PTHR31262:SF10">
    <property type="entry name" value="RIBULOSE BISPHOSPHATE CARBOXYLASE SMALL SUBUNIT 1A, CHLOROPLASTIC-RELATED"/>
    <property type="match status" value="1"/>
</dbReference>
<dbReference type="Pfam" id="PF12338">
    <property type="entry name" value="RbcS"/>
    <property type="match status" value="1"/>
</dbReference>
<dbReference type="Pfam" id="PF00101">
    <property type="entry name" value="RuBisCO_small"/>
    <property type="match status" value="1"/>
</dbReference>
<dbReference type="PRINTS" id="PR00152">
    <property type="entry name" value="RUBISCOSMALL"/>
</dbReference>
<dbReference type="SMART" id="SM00961">
    <property type="entry name" value="RuBisCO_small"/>
    <property type="match status" value="1"/>
</dbReference>
<dbReference type="SUPFAM" id="SSF55239">
    <property type="entry name" value="RuBisCO, small subunit"/>
    <property type="match status" value="1"/>
</dbReference>
<feature type="transit peptide" description="Chloroplast" evidence="1">
    <location>
        <begin position="1"/>
        <end position="58"/>
    </location>
</feature>
<feature type="chain" id="PRO_0000031491" description="Ribulose bisphosphate carboxylase small subunit, chloroplastic" evidence="1">
    <location>
        <begin position="59"/>
        <end position="182"/>
    </location>
</feature>
<reference key="1">
    <citation type="online journal article" date="1997" name="Plant Gene Register">
        <title>Molecular cloning of a cDNA encoding the small subunit of ribulose-1,5-bisphosphate carboxylase/oxygenase from the Japanese Beech (Fagus crenata Blume).</title>
        <authorList>
            <person name="Saito H."/>
            <person name="Futamura N."/>
            <person name="Mukai Y."/>
            <person name="Kakubari Y."/>
            <person name="Shinohara K."/>
        </authorList>
        <locator>PGR97-143</locator>
    </citation>
    <scope>NUCLEOTIDE SEQUENCE [MRNA]</scope>
    <source>
        <tissue>Leaf</tissue>
    </source>
</reference>
<protein>
    <recommendedName>
        <fullName evidence="1">Ribulose bisphosphate carboxylase small subunit, chloroplastic</fullName>
        <shortName evidence="1">RuBisCO small subunit</shortName>
    </recommendedName>
</protein>
<proteinExistence type="evidence at transcript level"/>
<gene>
    <name evidence="1" type="primary">RBCS</name>
    <name type="synonym">RBCS1</name>
</gene>
<comment type="function">
    <text evidence="1">RuBisCO catalyzes two reactions: the carboxylation of D-ribulose 1,5-bisphosphate, the primary event in carbon dioxide fixation, as well as the oxidative fragmentation of the pentose substrate. Both reactions occur simultaneously and in competition at the same active site. Although the small subunit is not catalytic it is essential for maximal activity.</text>
</comment>
<comment type="subunit">
    <text evidence="1">Heterohexadecamer of 8 large and 8 small subunits.</text>
</comment>
<comment type="subcellular location">
    <subcellularLocation>
        <location evidence="1">Plastid</location>
        <location evidence="1">Chloroplast</location>
    </subcellularLocation>
</comment>
<comment type="miscellaneous">
    <text evidence="1">The basic functional RuBisCO is composed of a large chain homodimer in a 'head-to-tail' conformation. In form I RuBisCO this homodimer is arranged in a barrel-like tetramer with the small subunits forming a tetrameric 'cap' on each end of the 'barrel'.</text>
</comment>
<comment type="similarity">
    <text evidence="1">Belongs to the RuBisCO small chain family.</text>
</comment>
<sequence length="182" mass="20335">MASSMISSATVATVSRATPAQATMVAPFTGLKSTAAFPATRKSNNDITSLASNGGRVQCMKVWPPLGLQKFETLSYLPPLSIESLAKQIEYLILKGWIPCLEFELEHPFVYRENNRSPGYYDGRYWVMWKLPMFGCTDATQVLAELQEASKTYPTSHIRIIGFDNKRQVQCISFIAYKPPAK</sequence>
<evidence type="ECO:0000255" key="1">
    <source>
        <dbReference type="HAMAP-Rule" id="MF_00860"/>
    </source>
</evidence>
<keyword id="KW-0113">Calvin cycle</keyword>
<keyword id="KW-0120">Carbon dioxide fixation</keyword>
<keyword id="KW-0150">Chloroplast</keyword>
<keyword id="KW-0601">Photorespiration</keyword>
<keyword id="KW-0602">Photosynthesis</keyword>
<keyword id="KW-0934">Plastid</keyword>
<keyword id="KW-0809">Transit peptide</keyword>
<organism>
    <name type="scientific">Fagus crenata</name>
    <name type="common">Japanese beech</name>
    <dbReference type="NCBI Taxonomy" id="28929"/>
    <lineage>
        <taxon>Eukaryota</taxon>
        <taxon>Viridiplantae</taxon>
        <taxon>Streptophyta</taxon>
        <taxon>Embryophyta</taxon>
        <taxon>Tracheophyta</taxon>
        <taxon>Spermatophyta</taxon>
        <taxon>Magnoliopsida</taxon>
        <taxon>eudicotyledons</taxon>
        <taxon>Gunneridae</taxon>
        <taxon>Pentapetalae</taxon>
        <taxon>rosids</taxon>
        <taxon>fabids</taxon>
        <taxon>Fagales</taxon>
        <taxon>Fagaceae</taxon>
        <taxon>Fagus</taxon>
    </lineage>
</organism>
<accession>O22077</accession>
<name>RBS_FAGCR</name>